<name>NHX1_YEAST</name>
<organism>
    <name type="scientific">Saccharomyces cerevisiae (strain ATCC 204508 / S288c)</name>
    <name type="common">Baker's yeast</name>
    <dbReference type="NCBI Taxonomy" id="559292"/>
    <lineage>
        <taxon>Eukaryota</taxon>
        <taxon>Fungi</taxon>
        <taxon>Dikarya</taxon>
        <taxon>Ascomycota</taxon>
        <taxon>Saccharomycotina</taxon>
        <taxon>Saccharomycetes</taxon>
        <taxon>Saccharomycetales</taxon>
        <taxon>Saccharomycetaceae</taxon>
        <taxon>Saccharomyces</taxon>
    </lineage>
</organism>
<accession>Q04121</accession>
<accession>D6VT80</accession>
<dbReference type="EMBL" id="U33007">
    <property type="protein sequence ID" value="AAB64861.1"/>
    <property type="molecule type" value="Genomic_DNA"/>
</dbReference>
<dbReference type="EMBL" id="BK006938">
    <property type="protein sequence ID" value="DAA12290.1"/>
    <property type="molecule type" value="Genomic_DNA"/>
</dbReference>
<dbReference type="PIR" id="S69734">
    <property type="entry name" value="S69734"/>
</dbReference>
<dbReference type="RefSeq" id="NP_010744.3">
    <property type="nucleotide sequence ID" value="NM_001180764.3"/>
</dbReference>
<dbReference type="SMR" id="Q04121"/>
<dbReference type="BioGRID" id="32510">
    <property type="interactions" value="292"/>
</dbReference>
<dbReference type="DIP" id="DIP-4145N"/>
<dbReference type="FunCoup" id="Q04121">
    <property type="interactions" value="453"/>
</dbReference>
<dbReference type="IntAct" id="Q04121">
    <property type="interactions" value="18"/>
</dbReference>
<dbReference type="MINT" id="Q04121"/>
<dbReference type="STRING" id="4932.YDR456W"/>
<dbReference type="TCDB" id="2.A.36.1.12">
    <property type="family name" value="the monovalent cation:proton antiporter-1 (cpa1) family"/>
</dbReference>
<dbReference type="GlyCosmos" id="Q04121">
    <property type="glycosylation" value="4 sites, No reported glycans"/>
</dbReference>
<dbReference type="GlyGen" id="Q04121">
    <property type="glycosylation" value="4 sites"/>
</dbReference>
<dbReference type="iPTMnet" id="Q04121"/>
<dbReference type="PaxDb" id="4932-YDR456W"/>
<dbReference type="PeptideAtlas" id="Q04121"/>
<dbReference type="TopDownProteomics" id="Q04121"/>
<dbReference type="EnsemblFungi" id="YDR456W_mRNA">
    <property type="protein sequence ID" value="YDR456W"/>
    <property type="gene ID" value="YDR456W"/>
</dbReference>
<dbReference type="GeneID" id="852066"/>
<dbReference type="KEGG" id="sce:YDR456W"/>
<dbReference type="AGR" id="SGD:S000002864"/>
<dbReference type="SGD" id="S000002864">
    <property type="gene designation" value="NHX1"/>
</dbReference>
<dbReference type="VEuPathDB" id="FungiDB:YDR456W"/>
<dbReference type="eggNOG" id="KOG1965">
    <property type="taxonomic scope" value="Eukaryota"/>
</dbReference>
<dbReference type="GeneTree" id="ENSGT00940000170200"/>
<dbReference type="HOGENOM" id="CLU_005912_5_1_1"/>
<dbReference type="InParanoid" id="Q04121"/>
<dbReference type="OMA" id="FTYVRRF"/>
<dbReference type="OrthoDB" id="196264at2759"/>
<dbReference type="BioCyc" id="YEAST:G3O-29984-MONOMER"/>
<dbReference type="Reactome" id="R-SCE-425986">
    <property type="pathway name" value="Sodium/Proton exchangers"/>
</dbReference>
<dbReference type="BioGRID-ORCS" id="852066">
    <property type="hits" value="0 hits in 10 CRISPR screens"/>
</dbReference>
<dbReference type="PRO" id="PR:Q04121"/>
<dbReference type="Proteomes" id="UP000002311">
    <property type="component" value="Chromosome IV"/>
</dbReference>
<dbReference type="RNAct" id="Q04121">
    <property type="molecule type" value="protein"/>
</dbReference>
<dbReference type="GO" id="GO:0005769">
    <property type="term" value="C:early endosome"/>
    <property type="evidence" value="ECO:0000314"/>
    <property type="project" value="SGD"/>
</dbReference>
<dbReference type="GO" id="GO:0005783">
    <property type="term" value="C:endoplasmic reticulum"/>
    <property type="evidence" value="ECO:0007005"/>
    <property type="project" value="SGD"/>
</dbReference>
<dbReference type="GO" id="GO:0010008">
    <property type="term" value="C:endosome membrane"/>
    <property type="evidence" value="ECO:0007669"/>
    <property type="project" value="UniProtKB-SubCell"/>
</dbReference>
<dbReference type="GO" id="GO:0000329">
    <property type="term" value="C:fungal-type vacuole membrane"/>
    <property type="evidence" value="ECO:0000314"/>
    <property type="project" value="SGD"/>
</dbReference>
<dbReference type="GO" id="GO:0005770">
    <property type="term" value="C:late endosome"/>
    <property type="evidence" value="ECO:0000314"/>
    <property type="project" value="SGD"/>
</dbReference>
<dbReference type="GO" id="GO:0005802">
    <property type="term" value="C:trans-Golgi network"/>
    <property type="evidence" value="ECO:0000314"/>
    <property type="project" value="SGD"/>
</dbReference>
<dbReference type="GO" id="GO:0015386">
    <property type="term" value="F:potassium:proton antiporter activity"/>
    <property type="evidence" value="ECO:0000315"/>
    <property type="project" value="SGD"/>
</dbReference>
<dbReference type="GO" id="GO:0015385">
    <property type="term" value="F:sodium:proton antiporter activity"/>
    <property type="evidence" value="ECO:0000315"/>
    <property type="project" value="SGD"/>
</dbReference>
<dbReference type="GO" id="GO:0030003">
    <property type="term" value="P:intracellular monoatomic cation homeostasis"/>
    <property type="evidence" value="ECO:0000315"/>
    <property type="project" value="SGD"/>
</dbReference>
<dbReference type="GO" id="GO:0061763">
    <property type="term" value="P:multivesicular body-lysosome fusion"/>
    <property type="evidence" value="ECO:0000315"/>
    <property type="project" value="SGD"/>
</dbReference>
<dbReference type="GO" id="GO:0071805">
    <property type="term" value="P:potassium ion transmembrane transport"/>
    <property type="evidence" value="ECO:0000315"/>
    <property type="project" value="SGD"/>
</dbReference>
<dbReference type="GO" id="GO:0035725">
    <property type="term" value="P:sodium ion transmembrane transport"/>
    <property type="evidence" value="ECO:0000315"/>
    <property type="project" value="SGD"/>
</dbReference>
<dbReference type="GO" id="GO:0007035">
    <property type="term" value="P:vacuolar acidification"/>
    <property type="evidence" value="ECO:0000315"/>
    <property type="project" value="SGD"/>
</dbReference>
<dbReference type="Gene3D" id="6.10.140.1330">
    <property type="match status" value="1"/>
</dbReference>
<dbReference type="InterPro" id="IPR018422">
    <property type="entry name" value="Cation/H_exchanger_CPA1"/>
</dbReference>
<dbReference type="InterPro" id="IPR006153">
    <property type="entry name" value="Cation/H_exchanger_TM"/>
</dbReference>
<dbReference type="InterPro" id="IPR004709">
    <property type="entry name" value="NaH_exchanger"/>
</dbReference>
<dbReference type="NCBIfam" id="TIGR00840">
    <property type="entry name" value="b_cpa1"/>
    <property type="match status" value="1"/>
</dbReference>
<dbReference type="PANTHER" id="PTHR10110">
    <property type="entry name" value="SODIUM/HYDROGEN EXCHANGER"/>
    <property type="match status" value="1"/>
</dbReference>
<dbReference type="PANTHER" id="PTHR10110:SF187">
    <property type="entry name" value="SODIUM_HYDROGEN EXCHANGER"/>
    <property type="match status" value="1"/>
</dbReference>
<dbReference type="Pfam" id="PF00999">
    <property type="entry name" value="Na_H_Exchanger"/>
    <property type="match status" value="1"/>
</dbReference>
<dbReference type="PRINTS" id="PR01084">
    <property type="entry name" value="NAHEXCHNGR"/>
</dbReference>
<sequence length="633" mass="70148">MLSKVLLNIAFKVLLTTAKRAVDPDDDDELLPSPDLPGSDDPIAGDPDVDLNPVTEEMFSSWALFIMLLLLISALWSSYYLTQKRIRAVHETVLSIFYGMVIGLIIRMSPGHYIQDTVTFNSSYFFNVLLPPIILNSGYELNQVNFFNNMLSILIFAIPGTFISAVVIGIILYIWTFLGLESIDISFADAMSVGATLSATDPVTILSIFNAYKVDPKLYTIIFGESLLNDAISIVMFETCQKFHGQPATFSSVFEGAGLFLMTFSVSLLIGVLIGILVALLLKHTHIRRYPQIESCLILLIAYESYFFSNGCHMSGIVSLLFCGITLKHYAYYNMSRRSQITIKYIFQLLARLSENFIFIYLGLELFTEVELVYKPLLIIVAAISICVARWCAVFPLSQFVNWIYRVKTIRSMSGITGENISVPDEIPYNYQMMTFWAGLRGAVGVALALGIQGEYKFTLLATVLVVVVLTVIIFGGTTAGMLEVLNIKTGCISEEDTSDDEFDIEAPRAINLLNGSSIQTDLGPYSDNNSPDISIDQFAVSSNKNLPNNISTTGGNTFGGLNETENTSPNPARSSMDKRNLRDKLGTIFNSDSQWFQNFDEQVLKPVFLDNVSPSLQDSATQSPADFSSQNH</sequence>
<evidence type="ECO:0000255" key="1"/>
<evidence type="ECO:0000256" key="2">
    <source>
        <dbReference type="SAM" id="MobiDB-lite"/>
    </source>
</evidence>
<evidence type="ECO:0000269" key="3">
    <source>
    </source>
</evidence>
<evidence type="ECO:0000269" key="4">
    <source>
    </source>
</evidence>
<evidence type="ECO:0000269" key="5">
    <source>
    </source>
</evidence>
<evidence type="ECO:0000269" key="6">
    <source>
    </source>
</evidence>
<evidence type="ECO:0000269" key="7">
    <source>
    </source>
</evidence>
<evidence type="ECO:0000269" key="8">
    <source>
    </source>
</evidence>
<evidence type="ECO:0000269" key="9">
    <source>
    </source>
</evidence>
<evidence type="ECO:0000269" key="10">
    <source>
    </source>
</evidence>
<evidence type="ECO:0000269" key="11">
    <source>
    </source>
</evidence>
<evidence type="ECO:0000269" key="12">
    <source>
    </source>
</evidence>
<evidence type="ECO:0000269" key="13">
    <source>
    </source>
</evidence>
<evidence type="ECO:0000269" key="14">
    <source>
    </source>
</evidence>
<evidence type="ECO:0000269" key="15">
    <source>
    </source>
</evidence>
<evidence type="ECO:0000269" key="16">
    <source>
    </source>
</evidence>
<evidence type="ECO:0000269" key="17">
    <source>
    </source>
</evidence>
<evidence type="ECO:0000305" key="18"/>
<evidence type="ECO:0000305" key="19">
    <source>
    </source>
</evidence>
<evidence type="ECO:0007744" key="20">
    <source>
    </source>
</evidence>
<keyword id="KW-0050">Antiport</keyword>
<keyword id="KW-0967">Endosome</keyword>
<keyword id="KW-0325">Glycoprotein</keyword>
<keyword id="KW-0406">Ion transport</keyword>
<keyword id="KW-0472">Membrane</keyword>
<keyword id="KW-0597">Phosphoprotein</keyword>
<keyword id="KW-0630">Potassium</keyword>
<keyword id="KW-0633">Potassium transport</keyword>
<keyword id="KW-1185">Reference proteome</keyword>
<keyword id="KW-0732">Signal</keyword>
<keyword id="KW-0915">Sodium</keyword>
<keyword id="KW-0739">Sodium transport</keyword>
<keyword id="KW-0812">Transmembrane</keyword>
<keyword id="KW-1133">Transmembrane helix</keyword>
<keyword id="KW-0813">Transport</keyword>
<proteinExistence type="evidence at protein level"/>
<gene>
    <name type="primary">NHX1</name>
    <name type="synonym">NHA2</name>
    <name type="synonym">VPL27</name>
    <name type="synonym">VPS44</name>
    <name type="ordered locus">YDR456W</name>
    <name type="ORF">D9461.40</name>
</gene>
<protein>
    <recommendedName>
        <fullName>Endosomal/prevacuolar sodium/hydrogen exchanger</fullName>
    </recommendedName>
    <alternativeName>
        <fullName>Endosomal/prevacuolar Na(+)/H(+) exchanger</fullName>
    </alternativeName>
    <alternativeName>
        <fullName>Vacuolar protein sorting-associated protein 44</fullName>
    </alternativeName>
</protein>
<feature type="signal peptide" evidence="1">
    <location>
        <begin position="1"/>
        <end position="21"/>
    </location>
</feature>
<feature type="chain" id="PRO_0000052380" description="Endosomal/prevacuolar sodium/hydrogen exchanger">
    <location>
        <begin position="22"/>
        <end position="633"/>
    </location>
</feature>
<feature type="topological domain" description="Lumenal" evidence="1">
    <location>
        <begin position="22"/>
        <end position="61"/>
    </location>
</feature>
<feature type="transmembrane region" description="Helical" evidence="1">
    <location>
        <begin position="62"/>
        <end position="82"/>
    </location>
</feature>
<feature type="topological domain" description="Cytoplasmic" evidence="1">
    <location>
        <begin position="83"/>
        <end position="85"/>
    </location>
</feature>
<feature type="transmembrane region" description="Helical" evidence="1">
    <location>
        <begin position="86"/>
        <end position="106"/>
    </location>
</feature>
<feature type="topological domain" description="Lumenal" evidence="1">
    <location>
        <begin position="107"/>
        <end position="117"/>
    </location>
</feature>
<feature type="transmembrane region" description="Helical" evidence="1">
    <location>
        <begin position="118"/>
        <end position="138"/>
    </location>
</feature>
<feature type="topological domain" description="Cytoplasmic" evidence="1">
    <location>
        <begin position="139"/>
        <end position="152"/>
    </location>
</feature>
<feature type="transmembrane region" description="Helical" evidence="1">
    <location>
        <begin position="153"/>
        <end position="173"/>
    </location>
</feature>
<feature type="topological domain" description="Lumenal" evidence="1">
    <location>
        <begin position="174"/>
        <end position="189"/>
    </location>
</feature>
<feature type="transmembrane region" description="Helical" evidence="1">
    <location>
        <begin position="190"/>
        <end position="211"/>
    </location>
</feature>
<feature type="topological domain" description="Cytoplasmic" evidence="1">
    <location>
        <begin position="212"/>
        <end position="217"/>
    </location>
</feature>
<feature type="transmembrane region" description="Helical" evidence="1">
    <location>
        <begin position="218"/>
        <end position="238"/>
    </location>
</feature>
<feature type="topological domain" description="Lumenal" evidence="1">
    <location>
        <begin position="239"/>
        <end position="258"/>
    </location>
</feature>
<feature type="transmembrane region" description="Helical" evidence="1">
    <location>
        <begin position="259"/>
        <end position="279"/>
    </location>
</feature>
<feature type="topological domain" description="Cytoplasmic" evidence="1">
    <location>
        <begin position="280"/>
        <end position="288"/>
    </location>
</feature>
<feature type="transmembrane region" description="Helical" evidence="1">
    <location>
        <begin position="289"/>
        <end position="308"/>
    </location>
</feature>
<feature type="topological domain" description="Lumenal" evidence="1">
    <location>
        <begin position="309"/>
        <end position="313"/>
    </location>
</feature>
<feature type="transmembrane region" description="Helical" evidence="1">
    <location>
        <begin position="314"/>
        <end position="333"/>
    </location>
</feature>
<feature type="topological domain" description="Cytoplasmic" evidence="1">
    <location>
        <begin position="334"/>
        <end position="344"/>
    </location>
</feature>
<feature type="transmembrane region" description="Helical" evidence="1">
    <location>
        <begin position="345"/>
        <end position="364"/>
    </location>
</feature>
<feature type="topological domain" description="Cytoplasmic" evidence="1">
    <location>
        <begin position="365"/>
        <end position="376"/>
    </location>
</feature>
<feature type="transmembrane region" description="Helical" evidence="1">
    <location>
        <begin position="377"/>
        <end position="397"/>
    </location>
</feature>
<feature type="topological domain" description="Lumenal" evidence="1">
    <location>
        <begin position="398"/>
        <end position="431"/>
    </location>
</feature>
<feature type="transmembrane region" description="Helical" evidence="1">
    <location>
        <begin position="432"/>
        <end position="452"/>
    </location>
</feature>
<feature type="topological domain" description="Cytoplasmic" evidence="1">
    <location>
        <begin position="453"/>
        <end position="457"/>
    </location>
</feature>
<feature type="transmembrane region" description="Helical" evidence="1">
    <location>
        <begin position="458"/>
        <end position="478"/>
    </location>
</feature>
<feature type="region of interest" description="Disordered" evidence="2">
    <location>
        <begin position="25"/>
        <end position="44"/>
    </location>
</feature>
<feature type="region of interest" description="Disordered" evidence="2">
    <location>
        <begin position="553"/>
        <end position="578"/>
    </location>
</feature>
<feature type="short sequence motif" description="Amiloride-binding">
    <location>
        <begin position="124"/>
        <end position="133"/>
    </location>
</feature>
<feature type="compositionally biased region" description="Low complexity" evidence="2">
    <location>
        <begin position="31"/>
        <end position="42"/>
    </location>
</feature>
<feature type="compositionally biased region" description="Polar residues" evidence="2">
    <location>
        <begin position="564"/>
        <end position="574"/>
    </location>
</feature>
<feature type="modified residue" description="Phosphothreonine" evidence="20">
    <location>
        <position position="490"/>
    </location>
</feature>
<feature type="modified residue" description="Phosphoserine" evidence="20">
    <location>
        <position position="494"/>
    </location>
</feature>
<feature type="modified residue" description="Phosphothreonine" evidence="20">
    <location>
        <position position="498"/>
    </location>
</feature>
<feature type="modified residue" description="Phosphoserine" evidence="20">
    <location>
        <position position="499"/>
    </location>
</feature>
<feature type="modified residue" description="Phosphoserine" evidence="20">
    <location>
        <position position="569"/>
    </location>
</feature>
<feature type="glycosylation site" description="N-linked (GlcNAc...) asparagine" evidence="1">
    <location>
        <position position="420"/>
    </location>
</feature>
<feature type="glycosylation site" description="N-linked (GlcNAc...) asparagine" evidence="5">
    <location>
        <position position="515"/>
    </location>
</feature>
<feature type="glycosylation site" description="N-linked (GlcNAc...) asparagine" evidence="5">
    <location>
        <position position="550"/>
    </location>
</feature>
<feature type="glycosylation site" description="N-linked (GlcNAc...) asparagine" evidence="5">
    <location>
        <position position="563"/>
    </location>
</feature>
<feature type="mutagenesis site" description="Impairs protein-trafficking to the vacuole." evidence="6">
    <original>D</original>
    <variation>N</variation>
    <location>
        <position position="201"/>
    </location>
</feature>
<feature type="mutagenesis site" description="Impairs protein-trafficking to the vacuole." evidence="6">
    <original>E</original>
    <variation>Q</variation>
    <location>
        <position position="225"/>
    </location>
</feature>
<feature type="mutagenesis site" description="Impairs protein-trafficking to the vacuole." evidence="6">
    <original>D</original>
    <variation>N</variation>
    <location>
        <position position="230"/>
    </location>
</feature>
<feature type="mutagenesis site" description="Impairs partially resistance to osmotic stress and hygromycin." evidence="12">
    <original>E</original>
    <variation>Q</variation>
    <location>
        <position position="355"/>
    </location>
</feature>
<feature type="mutagenesis site" description="Impairs resistance to osmotic stress and hygromycin, and blocks protein-trafficking to the vacuole." evidence="12">
    <original>F</original>
    <variation>A</variation>
    <variation>L</variation>
    <variation>I</variation>
    <location>
        <position position="357"/>
    </location>
</feature>
<feature type="mutagenesis site" description="Impairs partially resistance to osmotic stress and hygromycin." evidence="12">
    <original>F</original>
    <variation>V</variation>
    <location>
        <position position="357"/>
    </location>
</feature>
<feature type="mutagenesis site" description="Impairs resistance to osmotic stress and hygromycin, and blocks protein-trafficking to the vacuole." evidence="12">
    <original>Y</original>
    <variation>A</variation>
    <location>
        <position position="361"/>
    </location>
</feature>
<feature type="mutagenesis site" description="Impairs resistance to osmotic stress and hygromycin, and blocks protein-trafficking to the vacuole." evidence="12">
    <original>E</original>
    <variation>A</variation>
    <location>
        <position position="365"/>
    </location>
</feature>
<feature type="mutagenesis site" description="Impairs partially resistance to osmotic stress and hygromycin." evidence="12">
    <original>E</original>
    <variation>A</variation>
    <location>
        <position position="369"/>
    </location>
</feature>
<feature type="mutagenesis site" description="Impairs resistance to osmotic stress and hygromycin." evidence="12">
    <original>P</original>
    <variation>N</variation>
    <location>
        <position position="376"/>
    </location>
</feature>
<reference key="1">
    <citation type="journal article" date="1998" name="J. Biol. Chem.">
        <title>Identification of a mitochondrial Na+/H+ exchanger.</title>
        <authorList>
            <person name="Numata M."/>
            <person name="Petrecca K."/>
            <person name="Lake N."/>
            <person name="Orlowski J."/>
        </authorList>
    </citation>
    <scope>NUCLEOTIDE SEQUENCE [GENOMIC DNA]</scope>
</reference>
<reference key="2">
    <citation type="journal article" date="1997" name="Nature">
        <title>The nucleotide sequence of Saccharomyces cerevisiae chromosome IV.</title>
        <authorList>
            <person name="Jacq C."/>
            <person name="Alt-Moerbe J."/>
            <person name="Andre B."/>
            <person name="Arnold W."/>
            <person name="Bahr A."/>
            <person name="Ballesta J.P.G."/>
            <person name="Bargues M."/>
            <person name="Baron L."/>
            <person name="Becker A."/>
            <person name="Biteau N."/>
            <person name="Bloecker H."/>
            <person name="Blugeon C."/>
            <person name="Boskovic J."/>
            <person name="Brandt P."/>
            <person name="Brueckner M."/>
            <person name="Buitrago M.J."/>
            <person name="Coster F."/>
            <person name="Delaveau T."/>
            <person name="del Rey F."/>
            <person name="Dujon B."/>
            <person name="Eide L.G."/>
            <person name="Garcia-Cantalejo J.M."/>
            <person name="Goffeau A."/>
            <person name="Gomez-Peris A."/>
            <person name="Granotier C."/>
            <person name="Hanemann V."/>
            <person name="Hankeln T."/>
            <person name="Hoheisel J.D."/>
            <person name="Jaeger W."/>
            <person name="Jimenez A."/>
            <person name="Jonniaux J.-L."/>
            <person name="Kraemer C."/>
            <person name="Kuester H."/>
            <person name="Laamanen P."/>
            <person name="Legros Y."/>
            <person name="Louis E.J."/>
            <person name="Moeller-Rieker S."/>
            <person name="Monnet A."/>
            <person name="Moro M."/>
            <person name="Mueller-Auer S."/>
            <person name="Nussbaumer B."/>
            <person name="Paricio N."/>
            <person name="Paulin L."/>
            <person name="Perea J."/>
            <person name="Perez-Alonso M."/>
            <person name="Perez-Ortin J.E."/>
            <person name="Pohl T.M."/>
            <person name="Prydz H."/>
            <person name="Purnelle B."/>
            <person name="Rasmussen S.W."/>
            <person name="Remacha M.A."/>
            <person name="Revuelta J.L."/>
            <person name="Rieger M."/>
            <person name="Salom D."/>
            <person name="Saluz H.P."/>
            <person name="Saiz J.E."/>
            <person name="Saren A.-M."/>
            <person name="Schaefer M."/>
            <person name="Scharfe M."/>
            <person name="Schmidt E.R."/>
            <person name="Schneider C."/>
            <person name="Scholler P."/>
            <person name="Schwarz S."/>
            <person name="Soler-Mira A."/>
            <person name="Urrestarazu L.A."/>
            <person name="Verhasselt P."/>
            <person name="Vissers S."/>
            <person name="Voet M."/>
            <person name="Volckaert G."/>
            <person name="Wagner G."/>
            <person name="Wambutt R."/>
            <person name="Wedler E."/>
            <person name="Wedler H."/>
            <person name="Woelfl S."/>
            <person name="Harris D.E."/>
            <person name="Bowman S."/>
            <person name="Brown D."/>
            <person name="Churcher C.M."/>
            <person name="Connor R."/>
            <person name="Dedman K."/>
            <person name="Gentles S."/>
            <person name="Hamlin N."/>
            <person name="Hunt S."/>
            <person name="Jones L."/>
            <person name="McDonald S."/>
            <person name="Murphy L.D."/>
            <person name="Niblett D."/>
            <person name="Odell C."/>
            <person name="Oliver K."/>
            <person name="Rajandream M.A."/>
            <person name="Richards C."/>
            <person name="Shore L."/>
            <person name="Walsh S.V."/>
            <person name="Barrell B.G."/>
            <person name="Dietrich F.S."/>
            <person name="Mulligan J.T."/>
            <person name="Allen E."/>
            <person name="Araujo R."/>
            <person name="Aviles E."/>
            <person name="Berno A."/>
            <person name="Carpenter J."/>
            <person name="Chen E."/>
            <person name="Cherry J.M."/>
            <person name="Chung E."/>
            <person name="Duncan M."/>
            <person name="Hunicke-Smith S."/>
            <person name="Hyman R.W."/>
            <person name="Komp C."/>
            <person name="Lashkari D."/>
            <person name="Lew H."/>
            <person name="Lin D."/>
            <person name="Mosedale D."/>
            <person name="Nakahara K."/>
            <person name="Namath A."/>
            <person name="Oefner P."/>
            <person name="Oh C."/>
            <person name="Petel F.X."/>
            <person name="Roberts D."/>
            <person name="Schramm S."/>
            <person name="Schroeder M."/>
            <person name="Shogren T."/>
            <person name="Shroff N."/>
            <person name="Winant A."/>
            <person name="Yelton M.A."/>
            <person name="Botstein D."/>
            <person name="Davis R.W."/>
            <person name="Johnston M."/>
            <person name="Andrews S."/>
            <person name="Brinkman R."/>
            <person name="Cooper J."/>
            <person name="Ding H."/>
            <person name="Du Z."/>
            <person name="Favello A."/>
            <person name="Fulton L."/>
            <person name="Gattung S."/>
            <person name="Greco T."/>
            <person name="Hallsworth K."/>
            <person name="Hawkins J."/>
            <person name="Hillier L.W."/>
            <person name="Jier M."/>
            <person name="Johnson D."/>
            <person name="Johnston L."/>
            <person name="Kirsten J."/>
            <person name="Kucaba T."/>
            <person name="Langston Y."/>
            <person name="Latreille P."/>
            <person name="Le T."/>
            <person name="Mardis E."/>
            <person name="Menezes S."/>
            <person name="Miller N."/>
            <person name="Nhan M."/>
            <person name="Pauley A."/>
            <person name="Peluso D."/>
            <person name="Rifkin L."/>
            <person name="Riles L."/>
            <person name="Taich A."/>
            <person name="Trevaskis E."/>
            <person name="Vignati D."/>
            <person name="Wilcox L."/>
            <person name="Wohldman P."/>
            <person name="Vaudin M."/>
            <person name="Wilson R."/>
            <person name="Waterston R."/>
            <person name="Albermann K."/>
            <person name="Hani J."/>
            <person name="Heumann K."/>
            <person name="Kleine K."/>
            <person name="Mewes H.-W."/>
            <person name="Zollner A."/>
            <person name="Zaccaria P."/>
        </authorList>
    </citation>
    <scope>NUCLEOTIDE SEQUENCE [LARGE SCALE GENOMIC DNA]</scope>
    <source>
        <strain>ATCC 204508 / S288c</strain>
    </source>
</reference>
<reference key="3">
    <citation type="journal article" date="2014" name="G3 (Bethesda)">
        <title>The reference genome sequence of Saccharomyces cerevisiae: Then and now.</title>
        <authorList>
            <person name="Engel S.R."/>
            <person name="Dietrich F.S."/>
            <person name="Fisk D.G."/>
            <person name="Binkley G."/>
            <person name="Balakrishnan R."/>
            <person name="Costanzo M.C."/>
            <person name="Dwight S.S."/>
            <person name="Hitz B.C."/>
            <person name="Karra K."/>
            <person name="Nash R.S."/>
            <person name="Weng S."/>
            <person name="Wong E.D."/>
            <person name="Lloyd P."/>
            <person name="Skrzypek M.S."/>
            <person name="Miyasato S.R."/>
            <person name="Simison M."/>
            <person name="Cherry J.M."/>
        </authorList>
    </citation>
    <scope>GENOME REANNOTATION</scope>
    <source>
        <strain>ATCC 204508 / S288c</strain>
    </source>
</reference>
<reference key="4">
    <citation type="journal article" date="1992" name="Mol. Biol. Cell">
        <title>Morphological classification of the yeast vacuolar protein sorting mutants: evidence for a prevacuolar compartment in class E vps mutants.</title>
        <authorList>
            <person name="Raymond C.K."/>
            <person name="Howald-Stevenson I."/>
            <person name="Vater C.A."/>
            <person name="Stevens T.H."/>
        </authorList>
    </citation>
    <scope>FUNCTION</scope>
</reference>
<reference key="5">
    <citation type="journal article" date="1997" name="J. Biol. Chem.">
        <title>Intracellular sequestration of sodium by a novel Na+/H+ exchanger in yeast is enhanced by mutations in the plasma membrane H+-ATPase. Insights into mechanisms of sodium tolerance.</title>
        <authorList>
            <person name="Nass R."/>
            <person name="Cunningham K.W."/>
            <person name="Rao R."/>
        </authorList>
    </citation>
    <scope>FUNCTION</scope>
</reference>
<reference key="6">
    <citation type="journal article" date="1998" name="J. Biol. Chem.">
        <title>Novel localization of a Na+/H+ exchanger in a late endosomal compartment of yeast. Implications for vacuole biogenesis.</title>
        <authorList>
            <person name="Nass R."/>
            <person name="Rao R."/>
        </authorList>
    </citation>
    <scope>FUNCTION</scope>
    <scope>SUBCELLULAR LOCATION</scope>
</reference>
<reference key="7">
    <citation type="journal article" date="1999" name="Microbiology">
        <title>The yeast endosomal Na+/H+ exchanger, Nhx1, confers osmotolerance following acute hypertonic shock.</title>
        <authorList>
            <person name="Nass R."/>
            <person name="Rao R."/>
        </authorList>
    </citation>
    <scope>FUNCTION</scope>
</reference>
<reference key="8">
    <citation type="journal article" date="2000" name="Biochem. J.">
        <title>Arabidopsis thaliana and Saccharomyces cerevisiae NHX1 genes encode amiloride sensitive electroneutral Na(+)/H(+) exchangers.</title>
        <authorList>
            <person name="Darley C.P."/>
            <person name="van Wuytswinkel O.C.M."/>
            <person name="van der Woude K."/>
            <person name="Mager W.H."/>
            <person name="de Boer A.H."/>
        </authorList>
    </citation>
    <scope>FUNCTION</scope>
    <scope>SUBCELLULAR LOCATION</scope>
    <scope>DOMAIN</scope>
</reference>
<reference key="9">
    <citation type="journal article" date="2000" name="Mol. Biol. Cell">
        <title>The sodium/proton exchanger Nhx1p is required for endosomal protein trafficking in the yeast Saccharomyces cerevisiae.</title>
        <authorList>
            <person name="Bowers K."/>
            <person name="Levi B.P."/>
            <person name="Patel F.I."/>
            <person name="Stevens T.H."/>
        </authorList>
    </citation>
    <scope>FUNCTION</scope>
    <scope>SUBCELLULAR LOCATION</scope>
    <scope>MUTAGENESIS OF ASP-201; GLU-225 AND ASP-230</scope>
</reference>
<reference key="10">
    <citation type="journal article" date="2001" name="J. Biol. Chem.">
        <title>The yeast Na+/H+ exchanger Nhx1 is an N-linked glycoprotein. Topological implications.</title>
        <authorList>
            <person name="Wells K.M."/>
            <person name="Rao R."/>
        </authorList>
    </citation>
    <scope>GLYCOSYLATION</scope>
    <scope>TOPOLOGY</scope>
</reference>
<reference key="11">
    <citation type="journal article" date="2003" name="Nature">
        <title>Global analysis of protein expression in yeast.</title>
        <authorList>
            <person name="Ghaemmaghami S."/>
            <person name="Huh W.-K."/>
            <person name="Bower K."/>
            <person name="Howson R.W."/>
            <person name="Belle A."/>
            <person name="Dephoure N."/>
            <person name="O'Shea E.K."/>
            <person name="Weissman J.S."/>
        </authorList>
    </citation>
    <scope>LEVEL OF PROTEIN EXPRESSION [LARGE SCALE ANALYSIS]</scope>
</reference>
<reference key="12">
    <citation type="journal article" date="2004" name="J. Biol. Chem.">
        <title>Inhibition of sodium/proton exchange by a Rab-GTPase-activating protein regulates endosomal traffic in yeast.</title>
        <authorList>
            <person name="Ali R."/>
            <person name="Brett C.L."/>
            <person name="Mukherjee S."/>
            <person name="Rao R."/>
        </authorList>
    </citation>
    <scope>FUNCTION</scope>
    <scope>SUBCELLULAR LOCATION</scope>
    <scope>INTERACTION WITH CYP6</scope>
</reference>
<reference key="13">
    <citation type="journal article" date="2005" name="Mol. Biol. Cell">
        <title>The yeast endosomal Na+K+/H+ exchanger Nhx1 regulates cellular pH to control vesicle trafficking.</title>
        <authorList>
            <person name="Brett C.L."/>
            <person name="Tukaye D.N."/>
            <person name="Mukherjee S."/>
            <person name="Rao R."/>
        </authorList>
    </citation>
    <scope>FUNCTION</scope>
</reference>
<reference key="14">
    <citation type="journal article" date="2005" name="Mol. Microbiol.">
        <title>Physiological characterization of Saccharomyces cerevisiae kha1 deletion mutants.</title>
        <authorList>
            <person name="Maresova L."/>
            <person name="Sychrova H."/>
        </authorList>
    </citation>
    <scope>FUNCTION</scope>
</reference>
<reference key="15">
    <citation type="journal article" date="2006" name="Biochem. J.">
        <title>Mutational analysis of the intramembranous H10 loop of yeast Nhx1 reveals a critical role in ion homoeostasis and vesicle trafficking.</title>
        <authorList>
            <person name="Mukherjee S."/>
            <person name="Kallay L."/>
            <person name="Brett C.L."/>
            <person name="Rao R."/>
        </authorList>
    </citation>
    <scope>FUNCTION</scope>
    <scope>SUBCELLULAR LOCATION</scope>
    <scope>TOPOLOGY</scope>
    <scope>MUTAGENESIS OF GLU-355; PHE-357; TYR-361; GLU-365; GLU-369 AND PRO-376</scope>
</reference>
<reference key="16">
    <citation type="journal article" date="2007" name="Cell Biol. Int.">
        <title>Prevacuolar compartment morphology in vps mutants of Saccharomyces cerevisiae.</title>
        <authorList>
            <person name="Hedman J.M."/>
            <person name="Eggleston M.D."/>
            <person name="Attryde A.L."/>
            <person name="Marshall P.A."/>
        </authorList>
    </citation>
    <scope>SUBCELLULAR LOCATION</scope>
</reference>
<reference key="17">
    <citation type="journal article" date="2007" name="J. Biol. Chem.">
        <title>Identification and characterization of Vnx1p, a novel type of vacuolar monovalent cation/H+ antiporter of Saccharomyces cerevisiae.</title>
        <authorList>
            <person name="Cagnac O."/>
            <person name="Leterrier M."/>
            <person name="Yeager M."/>
            <person name="Blumwald E."/>
        </authorList>
    </citation>
    <scope>FUNCTION</scope>
</reference>
<reference key="18">
    <citation type="journal article" date="2008" name="J. Gen. Physiol.">
        <title>Chloride homeostasis in Saccharomyces cerevisiae: high affinity influx, V-ATPase-dependent sequestration, and identification of a candidate Cl-sensor.</title>
        <authorList>
            <person name="Jennings M.L."/>
            <person name="Cui J."/>
        </authorList>
    </citation>
    <scope>FUNCTION</scope>
</reference>
<reference key="19">
    <citation type="journal article" date="2008" name="Mol. Biol. Cell">
        <title>Cardiolipin mediates cross-talk between mitochondria and the vacuole.</title>
        <authorList>
            <person name="Chen S."/>
            <person name="Tarsio M."/>
            <person name="Kane P.M."/>
            <person name="Greenberg M.L."/>
        </authorList>
    </citation>
    <scope>FUNCTION</scope>
</reference>
<reference key="20">
    <citation type="journal article" date="2008" name="Mol. Cell. Proteomics">
        <title>A multidimensional chromatography technology for in-depth phosphoproteome analysis.</title>
        <authorList>
            <person name="Albuquerque C.P."/>
            <person name="Smolka M.B."/>
            <person name="Payne S.H."/>
            <person name="Bafna V."/>
            <person name="Eng J."/>
            <person name="Zhou H."/>
        </authorList>
    </citation>
    <scope>IDENTIFICATION BY MASS SPECTROMETRY [LARGE SCALE ANALYSIS]</scope>
</reference>
<reference key="21">
    <citation type="journal article" date="2009" name="Science">
        <title>Global analysis of Cdk1 substrate phosphorylation sites provides insights into evolution.</title>
        <authorList>
            <person name="Holt L.J."/>
            <person name="Tuch B.B."/>
            <person name="Villen J."/>
            <person name="Johnson A.D."/>
            <person name="Gygi S.P."/>
            <person name="Morgan D.O."/>
        </authorList>
    </citation>
    <scope>PHOSPHORYLATION [LARGE SCALE ANALYSIS] AT THR-490; SER-494; THR-498; SER-499 AND SER-569</scope>
    <scope>IDENTIFICATION BY MASS SPECTROMETRY [LARGE SCALE ANALYSIS]</scope>
</reference>
<comment type="function">
    <text evidence="3 4 6 8 9 10 11 12 13 14 15 16 17">Endosomal/prevacuolar electroneutral Na(+)/H(+) exchanger which mediates intracellular sequestration of Na(+) cations, regulates vacuolar pH and contributes to osmotolerance following sudden exposure to hyperosmotic media. Also contributes to the postdiauxic/stationary phase resistance to osmotic stress and allows for the continued growth of cells until the acquired osmotolerance response can occur. Involved in hygromycin resistance probably through its influence on the electrochemical proton gradient affecting secondarily the entrance of hygromycin. Mediates pH-dependent vesicle trafficking out of the endosome. Contributes to K(+) sequestration and homeostasis.</text>
</comment>
<comment type="subunit">
    <text evidence="8">Interacts with CYP6.</text>
</comment>
<comment type="subcellular location">
    <subcellularLocation>
        <location>Endosome membrane</location>
        <topology>Multi-pass membrane protein</topology>
    </subcellularLocation>
    <subcellularLocation>
        <location>Prevacuolar compartment membrane</location>
        <topology>Multi-pass membrane protein</topology>
    </subcellularLocation>
</comment>
<comment type="miscellaneous">
    <text evidence="7">Present with 521 molecules/cell in log phase SD medium.</text>
</comment>
<comment type="similarity">
    <text evidence="18">Belongs to the monovalent cation:proton antiporter 1 (CPA1) transporter (TC 2.A.36) family.</text>
</comment>
<comment type="caution">
    <text evidence="19">Numerous studies suggest that the C-terminal tail of the Na(+)/H(+) exchangers assumes a cytosolic orientation and constitutes a regulatory region. This cytosolic localization is confirmed by phosphorylation analysis (PubMed:15665377, PubMed:18407956). However, residues Asn-515, Asn-550 and Asn-563 have been shown to be glycosylated and localized at the lumenal side (PubMed:11036065). These contradictory results suggest an unusual topology of the C-terminal tail which may contain membrane spans formed by beta-sheets or even may switch from one side to the other of the membrane.</text>
</comment>